<reference key="1">
    <citation type="journal article" date="2002" name="Environ. Microbiol.">
        <title>Complete genome sequence and comparative analysis of the metabolically versatile Pseudomonas putida KT2440.</title>
        <authorList>
            <person name="Nelson K.E."/>
            <person name="Weinel C."/>
            <person name="Paulsen I.T."/>
            <person name="Dodson R.J."/>
            <person name="Hilbert H."/>
            <person name="Martins dos Santos V.A.P."/>
            <person name="Fouts D.E."/>
            <person name="Gill S.R."/>
            <person name="Pop M."/>
            <person name="Holmes M."/>
            <person name="Brinkac L.M."/>
            <person name="Beanan M.J."/>
            <person name="DeBoy R.T."/>
            <person name="Daugherty S.C."/>
            <person name="Kolonay J.F."/>
            <person name="Madupu R."/>
            <person name="Nelson W.C."/>
            <person name="White O."/>
            <person name="Peterson J.D."/>
            <person name="Khouri H.M."/>
            <person name="Hance I."/>
            <person name="Chris Lee P."/>
            <person name="Holtzapple E.K."/>
            <person name="Scanlan D."/>
            <person name="Tran K."/>
            <person name="Moazzez A."/>
            <person name="Utterback T.R."/>
            <person name="Rizzo M."/>
            <person name="Lee K."/>
            <person name="Kosack D."/>
            <person name="Moestl D."/>
            <person name="Wedler H."/>
            <person name="Lauber J."/>
            <person name="Stjepandic D."/>
            <person name="Hoheisel J."/>
            <person name="Straetz M."/>
            <person name="Heim S."/>
            <person name="Kiewitz C."/>
            <person name="Eisen J.A."/>
            <person name="Timmis K.N."/>
            <person name="Duesterhoeft A."/>
            <person name="Tuemmler B."/>
            <person name="Fraser C.M."/>
        </authorList>
    </citation>
    <scope>NUCLEOTIDE SEQUENCE [LARGE SCALE GENOMIC DNA]</scope>
    <source>
        <strain>ATCC 47054 / DSM 6125 / CFBP 8728 / NCIMB 11950 / KT2440</strain>
    </source>
</reference>
<name>GLND_PSEPK</name>
<dbReference type="EC" id="2.7.7.59" evidence="1"/>
<dbReference type="EC" id="3.1.4.-" evidence="1"/>
<dbReference type="EMBL" id="AE015451">
    <property type="protein sequence ID" value="AAN67210.1"/>
    <property type="molecule type" value="Genomic_DNA"/>
</dbReference>
<dbReference type="RefSeq" id="NP_743746.1">
    <property type="nucleotide sequence ID" value="NC_002947.4"/>
</dbReference>
<dbReference type="RefSeq" id="WP_010952673.1">
    <property type="nucleotide sequence ID" value="NZ_CP169744.1"/>
</dbReference>
<dbReference type="SMR" id="Q88MI2"/>
<dbReference type="STRING" id="160488.PP_1589"/>
<dbReference type="PaxDb" id="160488-PP_1589"/>
<dbReference type="KEGG" id="ppu:PP_1589"/>
<dbReference type="PATRIC" id="fig|160488.4.peg.1680"/>
<dbReference type="eggNOG" id="COG2844">
    <property type="taxonomic scope" value="Bacteria"/>
</dbReference>
<dbReference type="HOGENOM" id="CLU_012833_0_0_6"/>
<dbReference type="OrthoDB" id="9758038at2"/>
<dbReference type="PhylomeDB" id="Q88MI2"/>
<dbReference type="BioCyc" id="PPUT160488:G1G01-1685-MONOMER"/>
<dbReference type="Proteomes" id="UP000000556">
    <property type="component" value="Chromosome"/>
</dbReference>
<dbReference type="GO" id="GO:0008773">
    <property type="term" value="F:[protein-PII] uridylyltransferase activity"/>
    <property type="evidence" value="ECO:0007669"/>
    <property type="project" value="UniProtKB-UniRule"/>
</dbReference>
<dbReference type="GO" id="GO:0008081">
    <property type="term" value="F:phosphoric diester hydrolase activity"/>
    <property type="evidence" value="ECO:0007669"/>
    <property type="project" value="UniProtKB-UniRule"/>
</dbReference>
<dbReference type="GO" id="GO:0006808">
    <property type="term" value="P:regulation of nitrogen utilization"/>
    <property type="evidence" value="ECO:0007669"/>
    <property type="project" value="UniProtKB-UniRule"/>
</dbReference>
<dbReference type="CDD" id="cd04899">
    <property type="entry name" value="ACT_ACR-UUR-like_2"/>
    <property type="match status" value="1"/>
</dbReference>
<dbReference type="CDD" id="cd04900">
    <property type="entry name" value="ACT_UUR-like_1"/>
    <property type="match status" value="1"/>
</dbReference>
<dbReference type="CDD" id="cd00077">
    <property type="entry name" value="HDc"/>
    <property type="match status" value="1"/>
</dbReference>
<dbReference type="CDD" id="cd05401">
    <property type="entry name" value="NT_GlnE_GlnD_like"/>
    <property type="match status" value="1"/>
</dbReference>
<dbReference type="FunFam" id="1.10.3090.10:FF:000005">
    <property type="entry name" value="Bifunctional uridylyltransferase/uridylyl-removing enzyme"/>
    <property type="match status" value="1"/>
</dbReference>
<dbReference type="Gene3D" id="3.30.460.10">
    <property type="entry name" value="Beta Polymerase, domain 2"/>
    <property type="match status" value="1"/>
</dbReference>
<dbReference type="Gene3D" id="1.10.3090.10">
    <property type="entry name" value="cca-adding enzyme, domain 2"/>
    <property type="match status" value="1"/>
</dbReference>
<dbReference type="Gene3D" id="1.20.120.330">
    <property type="entry name" value="Nucleotidyltransferases domain 2"/>
    <property type="match status" value="1"/>
</dbReference>
<dbReference type="HAMAP" id="MF_00277">
    <property type="entry name" value="PII_uridylyl_transf"/>
    <property type="match status" value="1"/>
</dbReference>
<dbReference type="InterPro" id="IPR045865">
    <property type="entry name" value="ACT-like_dom_sf"/>
</dbReference>
<dbReference type="InterPro" id="IPR002912">
    <property type="entry name" value="ACT_dom"/>
</dbReference>
<dbReference type="InterPro" id="IPR003607">
    <property type="entry name" value="HD/PDEase_dom"/>
</dbReference>
<dbReference type="InterPro" id="IPR006674">
    <property type="entry name" value="HD_domain"/>
</dbReference>
<dbReference type="InterPro" id="IPR043519">
    <property type="entry name" value="NT_sf"/>
</dbReference>
<dbReference type="InterPro" id="IPR013546">
    <property type="entry name" value="PII_UdlTrfase/GS_AdlTrfase"/>
</dbReference>
<dbReference type="InterPro" id="IPR002934">
    <property type="entry name" value="Polymerase_NTP_transf_dom"/>
</dbReference>
<dbReference type="InterPro" id="IPR010043">
    <property type="entry name" value="UTase/UR"/>
</dbReference>
<dbReference type="NCBIfam" id="NF001366">
    <property type="entry name" value="PRK00275.1"/>
    <property type="match status" value="1"/>
</dbReference>
<dbReference type="NCBIfam" id="TIGR01693">
    <property type="entry name" value="UTase_glnD"/>
    <property type="match status" value="1"/>
</dbReference>
<dbReference type="PANTHER" id="PTHR47320">
    <property type="entry name" value="BIFUNCTIONAL URIDYLYLTRANSFERASE/URIDYLYL-REMOVING ENZYME"/>
    <property type="match status" value="1"/>
</dbReference>
<dbReference type="PANTHER" id="PTHR47320:SF1">
    <property type="entry name" value="BIFUNCTIONAL URIDYLYLTRANSFERASE_URIDYLYL-REMOVING ENZYME"/>
    <property type="match status" value="1"/>
</dbReference>
<dbReference type="Pfam" id="PF01842">
    <property type="entry name" value="ACT"/>
    <property type="match status" value="1"/>
</dbReference>
<dbReference type="Pfam" id="PF08335">
    <property type="entry name" value="GlnD_UR_UTase"/>
    <property type="match status" value="1"/>
</dbReference>
<dbReference type="Pfam" id="PF01966">
    <property type="entry name" value="HD"/>
    <property type="match status" value="1"/>
</dbReference>
<dbReference type="Pfam" id="PF01909">
    <property type="entry name" value="NTP_transf_2"/>
    <property type="match status" value="1"/>
</dbReference>
<dbReference type="PIRSF" id="PIRSF006288">
    <property type="entry name" value="PII_uridyltransf"/>
    <property type="match status" value="1"/>
</dbReference>
<dbReference type="SMART" id="SM00471">
    <property type="entry name" value="HDc"/>
    <property type="match status" value="1"/>
</dbReference>
<dbReference type="SUPFAM" id="SSF55021">
    <property type="entry name" value="ACT-like"/>
    <property type="match status" value="2"/>
</dbReference>
<dbReference type="SUPFAM" id="SSF109604">
    <property type="entry name" value="HD-domain/PDEase-like"/>
    <property type="match status" value="1"/>
</dbReference>
<dbReference type="SUPFAM" id="SSF81301">
    <property type="entry name" value="Nucleotidyltransferase"/>
    <property type="match status" value="1"/>
</dbReference>
<dbReference type="SUPFAM" id="SSF81593">
    <property type="entry name" value="Nucleotidyltransferase substrate binding subunit/domain"/>
    <property type="match status" value="1"/>
</dbReference>
<dbReference type="PROSITE" id="PS51671">
    <property type="entry name" value="ACT"/>
    <property type="match status" value="2"/>
</dbReference>
<dbReference type="PROSITE" id="PS51831">
    <property type="entry name" value="HD"/>
    <property type="match status" value="1"/>
</dbReference>
<feature type="chain" id="PRO_0000192754" description="Bifunctional uridylyltransferase/uridylyl-removing enzyme">
    <location>
        <begin position="1"/>
        <end position="900"/>
    </location>
</feature>
<feature type="domain" description="HD" evidence="2">
    <location>
        <begin position="461"/>
        <end position="583"/>
    </location>
</feature>
<feature type="domain" description="ACT 1" evidence="1">
    <location>
        <begin position="706"/>
        <end position="784"/>
    </location>
</feature>
<feature type="domain" description="ACT 2" evidence="1">
    <location>
        <begin position="816"/>
        <end position="900"/>
    </location>
</feature>
<feature type="region of interest" description="Uridylyltransferase">
    <location>
        <begin position="1"/>
        <end position="342"/>
    </location>
</feature>
<feature type="region of interest" description="Uridylyl-removing">
    <location>
        <begin position="343"/>
        <end position="705"/>
    </location>
</feature>
<evidence type="ECO:0000255" key="1">
    <source>
        <dbReference type="HAMAP-Rule" id="MF_00277"/>
    </source>
</evidence>
<evidence type="ECO:0000255" key="2">
    <source>
        <dbReference type="PROSITE-ProRule" id="PRU01175"/>
    </source>
</evidence>
<proteinExistence type="inferred from homology"/>
<organism>
    <name type="scientific">Pseudomonas putida (strain ATCC 47054 / DSM 6125 / CFBP 8728 / NCIMB 11950 / KT2440)</name>
    <dbReference type="NCBI Taxonomy" id="160488"/>
    <lineage>
        <taxon>Bacteria</taxon>
        <taxon>Pseudomonadati</taxon>
        <taxon>Pseudomonadota</taxon>
        <taxon>Gammaproteobacteria</taxon>
        <taxon>Pseudomonadales</taxon>
        <taxon>Pseudomonadaceae</taxon>
        <taxon>Pseudomonas</taxon>
    </lineage>
</organism>
<sequence>MPQVDPELFDRGQFQAELALKASPIAAFKKAIRLAGEVLDKRFRAGSDIRPLIEARAWLVDNILQQAWNQFDWGDQSGIALVAVGGYGRGELHPHSDIDLLILLGAAEHEQYRDAIERFLTLLWDIGLEVGQSVRTVDECAEQARADLTVITNLMESRTIAGPEALRQRMLEVTSTAHMWPSKEFFLAKRAELKARHHKYNDTEYNLEPNVKGSPGGLRDIQTVLWVARRQYGTLNLHALAGEGFLLESENELLASSQDFLWKVRYALHMLAGRAEDRLLFDHQRSIATLLGYSDENPKRAIEQFMQQYYRVVMSISQLCDLIIQHFEEVILADEESGSTQPLNARFRLHDGYIEATHPNVFKRTPFAMLEIFVLMAQHPEIKGVRADTVRLLREHRHLIDDTFRTDIRNTSLFIELFKCEIGIHRNLRRMNRYGILGRYLPEFGLIVGQMQHDLFHIYTVDAHTLNLIKHLRKLQYTPVSEKFPLASKLMGRLPKPELIYLAGLYHDIGKGRQGDHSEIGAVDAQKFCERHQLPAWDSRLIVWLVQNHLVMSTTAQRKDLSDPQVINDFALHVGDETRLDYLYVLTVADINATNPSLWNSWRASLLRQLYTETKRALRRGLENPLDREEQIRQTQSSALDILVREGTDPDDVEQLWAQLGDDYFLKHTAADVAWHTDAILQQPADGGPLVLIKETTQREFEGGTQIFIYAPDQHDFFAVTVAAMSQLNLNIHDARIITSSSQFTLDTYIVLDNDGGSIGDNPQRVKQIRDGLTEALRNPEDYPTIIQRRVPRQLKHFDFPPQVTILNDAQRPVTILEITAPDRPGLLARLGRIFLEFDLSLQNAKIATLGERVEDVFFITDADNQPLSDPQLCSRLQEAIVQQLQAGQGSDTSQTRVTF</sequence>
<protein>
    <recommendedName>
        <fullName evidence="1">Bifunctional uridylyltransferase/uridylyl-removing enzyme</fullName>
        <shortName evidence="1">UTase/UR</shortName>
    </recommendedName>
    <alternativeName>
        <fullName evidence="1">Bifunctional [protein-PII] modification enzyme</fullName>
    </alternativeName>
    <alternativeName>
        <fullName evidence="1">Bifunctional nitrogen sensor protein</fullName>
    </alternativeName>
    <domain>
        <recommendedName>
            <fullName evidence="1">[Protein-PII] uridylyltransferase</fullName>
            <shortName evidence="1">PII uridylyltransferase</shortName>
            <shortName evidence="1">UTase</shortName>
            <ecNumber evidence="1">2.7.7.59</ecNumber>
        </recommendedName>
    </domain>
    <domain>
        <recommendedName>
            <fullName evidence="1">[Protein-PII]-UMP uridylyl-removing enzyme</fullName>
            <shortName evidence="1">UR</shortName>
            <ecNumber evidence="1">3.1.4.-</ecNumber>
        </recommendedName>
    </domain>
</protein>
<keyword id="KW-0378">Hydrolase</keyword>
<keyword id="KW-0460">Magnesium</keyword>
<keyword id="KW-0511">Multifunctional enzyme</keyword>
<keyword id="KW-0548">Nucleotidyltransferase</keyword>
<keyword id="KW-1185">Reference proteome</keyword>
<keyword id="KW-0677">Repeat</keyword>
<keyword id="KW-0808">Transferase</keyword>
<comment type="function">
    <text evidence="1">Modifies, by uridylylation and deuridylylation, the PII regulatory proteins (GlnB and homologs), in response to the nitrogen status of the cell that GlnD senses through the glutamine level. Under low glutamine levels, catalyzes the conversion of the PII proteins and UTP to PII-UMP and PPi, while under higher glutamine levels, GlnD hydrolyzes PII-UMP to PII and UMP (deuridylylation). Thus, controls uridylylation state and activity of the PII proteins, and plays an important role in the regulation of nitrogen assimilation and metabolism.</text>
</comment>
<comment type="catalytic activity">
    <reaction evidence="1">
        <text>[protein-PII]-L-tyrosine + UTP = [protein-PII]-uridylyl-L-tyrosine + diphosphate</text>
        <dbReference type="Rhea" id="RHEA:13673"/>
        <dbReference type="Rhea" id="RHEA-COMP:12147"/>
        <dbReference type="Rhea" id="RHEA-COMP:12148"/>
        <dbReference type="ChEBI" id="CHEBI:33019"/>
        <dbReference type="ChEBI" id="CHEBI:46398"/>
        <dbReference type="ChEBI" id="CHEBI:46858"/>
        <dbReference type="ChEBI" id="CHEBI:90602"/>
        <dbReference type="EC" id="2.7.7.59"/>
    </reaction>
</comment>
<comment type="catalytic activity">
    <reaction evidence="1">
        <text>[protein-PII]-uridylyl-L-tyrosine + H2O = [protein-PII]-L-tyrosine + UMP + H(+)</text>
        <dbReference type="Rhea" id="RHEA:48600"/>
        <dbReference type="Rhea" id="RHEA-COMP:12147"/>
        <dbReference type="Rhea" id="RHEA-COMP:12148"/>
        <dbReference type="ChEBI" id="CHEBI:15377"/>
        <dbReference type="ChEBI" id="CHEBI:15378"/>
        <dbReference type="ChEBI" id="CHEBI:46858"/>
        <dbReference type="ChEBI" id="CHEBI:57865"/>
        <dbReference type="ChEBI" id="CHEBI:90602"/>
    </reaction>
</comment>
<comment type="cofactor">
    <cofactor evidence="1">
        <name>Mg(2+)</name>
        <dbReference type="ChEBI" id="CHEBI:18420"/>
    </cofactor>
</comment>
<comment type="activity regulation">
    <text evidence="1">Uridylyltransferase (UTase) activity is inhibited by glutamine, while glutamine activates uridylyl-removing (UR) activity.</text>
</comment>
<comment type="domain">
    <text evidence="1">Has four distinct domains: an N-terminal nucleotidyltransferase (NT) domain responsible for UTase activity, a central HD domain that encodes UR activity, and two C-terminal ACT domains that seem to have a role in glutamine sensing.</text>
</comment>
<comment type="similarity">
    <text evidence="1">Belongs to the GlnD family.</text>
</comment>
<gene>
    <name evidence="1" type="primary">glnD</name>
    <name type="ordered locus">PP_1589</name>
</gene>
<accession>Q88MI2</accession>